<comment type="function">
    <text evidence="1">Endonuclease that specifically degrades the RNA of RNA-DNA hybrids.</text>
</comment>
<comment type="catalytic activity">
    <reaction evidence="1">
        <text>Endonucleolytic cleavage to 5'-phosphomonoester.</text>
        <dbReference type="EC" id="3.1.26.4"/>
    </reaction>
</comment>
<comment type="cofactor">
    <cofactor evidence="1">
        <name>Mn(2+)</name>
        <dbReference type="ChEBI" id="CHEBI:29035"/>
    </cofactor>
    <cofactor evidence="1">
        <name>Mg(2+)</name>
        <dbReference type="ChEBI" id="CHEBI:18420"/>
    </cofactor>
    <text evidence="1">Manganese or magnesium. Binds 1 divalent metal ion per monomer in the absence of substrate. May bind a second metal ion after substrate binding.</text>
</comment>
<comment type="subcellular location">
    <subcellularLocation>
        <location evidence="1">Cytoplasm</location>
    </subcellularLocation>
</comment>
<comment type="similarity">
    <text evidence="1">Belongs to the RNase HII family.</text>
</comment>
<proteinExistence type="inferred from homology"/>
<name>RNH2_CAMJR</name>
<reference key="1">
    <citation type="journal article" date="2005" name="PLoS Biol.">
        <title>Major structural differences and novel potential virulence mechanisms from the genomes of multiple Campylobacter species.</title>
        <authorList>
            <person name="Fouts D.E."/>
            <person name="Mongodin E.F."/>
            <person name="Mandrell R.E."/>
            <person name="Miller W.G."/>
            <person name="Rasko D.A."/>
            <person name="Ravel J."/>
            <person name="Brinkac L.M."/>
            <person name="DeBoy R.T."/>
            <person name="Parker C.T."/>
            <person name="Daugherty S.C."/>
            <person name="Dodson R.J."/>
            <person name="Durkin A.S."/>
            <person name="Madupu R."/>
            <person name="Sullivan S.A."/>
            <person name="Shetty J.U."/>
            <person name="Ayodeji M.A."/>
            <person name="Shvartsbeyn A."/>
            <person name="Schatz M.C."/>
            <person name="Badger J.H."/>
            <person name="Fraser C.M."/>
            <person name="Nelson K.E."/>
        </authorList>
    </citation>
    <scope>NUCLEOTIDE SEQUENCE [LARGE SCALE GENOMIC DNA]</scope>
    <source>
        <strain>RM1221</strain>
    </source>
</reference>
<protein>
    <recommendedName>
        <fullName evidence="1">Ribonuclease HII</fullName>
        <shortName evidence="1">RNase HII</shortName>
        <ecNumber evidence="1">3.1.26.4</ecNumber>
    </recommendedName>
</protein>
<feature type="chain" id="PRO_0000111554" description="Ribonuclease HII">
    <location>
        <begin position="1"/>
        <end position="191"/>
    </location>
</feature>
<feature type="domain" description="RNase H type-2" evidence="2">
    <location>
        <begin position="16"/>
        <end position="191"/>
    </location>
</feature>
<feature type="binding site" evidence="1">
    <location>
        <position position="22"/>
    </location>
    <ligand>
        <name>a divalent metal cation</name>
        <dbReference type="ChEBI" id="CHEBI:60240"/>
    </ligand>
</feature>
<feature type="binding site" evidence="1">
    <location>
        <position position="23"/>
    </location>
    <ligand>
        <name>a divalent metal cation</name>
        <dbReference type="ChEBI" id="CHEBI:60240"/>
    </ligand>
</feature>
<feature type="binding site" evidence="1">
    <location>
        <position position="110"/>
    </location>
    <ligand>
        <name>a divalent metal cation</name>
        <dbReference type="ChEBI" id="CHEBI:60240"/>
    </ligand>
</feature>
<gene>
    <name evidence="1" type="primary">rnhB</name>
    <name type="ordered locus">CJE0009</name>
</gene>
<keyword id="KW-0963">Cytoplasm</keyword>
<keyword id="KW-0255">Endonuclease</keyword>
<keyword id="KW-0378">Hydrolase</keyword>
<keyword id="KW-0464">Manganese</keyword>
<keyword id="KW-0479">Metal-binding</keyword>
<keyword id="KW-0540">Nuclease</keyword>
<accession>Q5HXE7</accession>
<evidence type="ECO:0000255" key="1">
    <source>
        <dbReference type="HAMAP-Rule" id="MF_00052"/>
    </source>
</evidence>
<evidence type="ECO:0000255" key="2">
    <source>
        <dbReference type="PROSITE-ProRule" id="PRU01319"/>
    </source>
</evidence>
<organism>
    <name type="scientific">Campylobacter jejuni (strain RM1221)</name>
    <dbReference type="NCBI Taxonomy" id="195099"/>
    <lineage>
        <taxon>Bacteria</taxon>
        <taxon>Pseudomonadati</taxon>
        <taxon>Campylobacterota</taxon>
        <taxon>Epsilonproteobacteria</taxon>
        <taxon>Campylobacterales</taxon>
        <taxon>Campylobacteraceae</taxon>
        <taxon>Campylobacter</taxon>
    </lineage>
</organism>
<dbReference type="EC" id="3.1.26.4" evidence="1"/>
<dbReference type="EMBL" id="CP000025">
    <property type="protein sequence ID" value="AAW34506.1"/>
    <property type="molecule type" value="Genomic_DNA"/>
</dbReference>
<dbReference type="RefSeq" id="WP_002853153.1">
    <property type="nucleotide sequence ID" value="NC_003912.7"/>
</dbReference>
<dbReference type="SMR" id="Q5HXE7"/>
<dbReference type="DNASU" id="3230665"/>
<dbReference type="KEGG" id="cjr:CJE0009"/>
<dbReference type="HOGENOM" id="CLU_036532_3_1_7"/>
<dbReference type="GO" id="GO:0005737">
    <property type="term" value="C:cytoplasm"/>
    <property type="evidence" value="ECO:0007669"/>
    <property type="project" value="UniProtKB-SubCell"/>
</dbReference>
<dbReference type="GO" id="GO:0032299">
    <property type="term" value="C:ribonuclease H2 complex"/>
    <property type="evidence" value="ECO:0007669"/>
    <property type="project" value="TreeGrafter"/>
</dbReference>
<dbReference type="GO" id="GO:0030145">
    <property type="term" value="F:manganese ion binding"/>
    <property type="evidence" value="ECO:0007669"/>
    <property type="project" value="UniProtKB-UniRule"/>
</dbReference>
<dbReference type="GO" id="GO:0003723">
    <property type="term" value="F:RNA binding"/>
    <property type="evidence" value="ECO:0007669"/>
    <property type="project" value="InterPro"/>
</dbReference>
<dbReference type="GO" id="GO:0004523">
    <property type="term" value="F:RNA-DNA hybrid ribonuclease activity"/>
    <property type="evidence" value="ECO:0007669"/>
    <property type="project" value="UniProtKB-UniRule"/>
</dbReference>
<dbReference type="GO" id="GO:0043137">
    <property type="term" value="P:DNA replication, removal of RNA primer"/>
    <property type="evidence" value="ECO:0007669"/>
    <property type="project" value="TreeGrafter"/>
</dbReference>
<dbReference type="GO" id="GO:0006298">
    <property type="term" value="P:mismatch repair"/>
    <property type="evidence" value="ECO:0007669"/>
    <property type="project" value="TreeGrafter"/>
</dbReference>
<dbReference type="CDD" id="cd07182">
    <property type="entry name" value="RNase_HII_bacteria_HII_like"/>
    <property type="match status" value="1"/>
</dbReference>
<dbReference type="Gene3D" id="3.30.420.10">
    <property type="entry name" value="Ribonuclease H-like superfamily/Ribonuclease H"/>
    <property type="match status" value="1"/>
</dbReference>
<dbReference type="HAMAP" id="MF_00052_B">
    <property type="entry name" value="RNase_HII_B"/>
    <property type="match status" value="1"/>
</dbReference>
<dbReference type="InterPro" id="IPR022898">
    <property type="entry name" value="RNase_HII"/>
</dbReference>
<dbReference type="InterPro" id="IPR001352">
    <property type="entry name" value="RNase_HII/HIII"/>
</dbReference>
<dbReference type="InterPro" id="IPR024567">
    <property type="entry name" value="RNase_HII/HIII_dom"/>
</dbReference>
<dbReference type="InterPro" id="IPR012337">
    <property type="entry name" value="RNaseH-like_sf"/>
</dbReference>
<dbReference type="InterPro" id="IPR036397">
    <property type="entry name" value="RNaseH_sf"/>
</dbReference>
<dbReference type="NCBIfam" id="NF000595">
    <property type="entry name" value="PRK00015.1-3"/>
    <property type="match status" value="1"/>
</dbReference>
<dbReference type="PANTHER" id="PTHR10954">
    <property type="entry name" value="RIBONUCLEASE H2 SUBUNIT A"/>
    <property type="match status" value="1"/>
</dbReference>
<dbReference type="PANTHER" id="PTHR10954:SF18">
    <property type="entry name" value="RIBONUCLEASE HII"/>
    <property type="match status" value="1"/>
</dbReference>
<dbReference type="Pfam" id="PF01351">
    <property type="entry name" value="RNase_HII"/>
    <property type="match status" value="1"/>
</dbReference>
<dbReference type="SUPFAM" id="SSF53098">
    <property type="entry name" value="Ribonuclease H-like"/>
    <property type="match status" value="1"/>
</dbReference>
<dbReference type="PROSITE" id="PS51975">
    <property type="entry name" value="RNASE_H_2"/>
    <property type="match status" value="1"/>
</dbReference>
<sequence>MKTLFDTKELLNEFDINLIGIDEAGRGALAGPMMMAACKLNKQLDGLCDSKKLSEKKREELYEIIIKNSNYLILAFSSEQIDALGLSTCLKKGLKLIKKHFKTENNFLYDGNTNLGINGIKTQIKADTSILQVSAASILAKVSKDRVMNFLAKDFPCYEFEKNKAYGTKAHKEFIAKFGICKLHRKSFKLL</sequence>